<keyword id="KW-1015">Disulfide bond</keyword>
<keyword id="KW-0964">Secreted</keyword>
<keyword id="KW-0732">Signal</keyword>
<keyword id="KW-0843">Virulence</keyword>
<name>TOX1_PHANO</name>
<gene>
    <name evidence="12" type="primary">Tox1</name>
    <name type="ORF">SNOG_20078</name>
</gene>
<dbReference type="EMBL" id="CH445334">
    <property type="protein sequence ID" value="EDP89767.1"/>
    <property type="molecule type" value="Genomic_DNA"/>
</dbReference>
<dbReference type="RefSeq" id="XP_001797505.1">
    <property type="nucleotide sequence ID" value="XM_001797453.1"/>
</dbReference>
<dbReference type="EnsemblFungi" id="SNOT_20078">
    <property type="protein sequence ID" value="SNOT_20078"/>
    <property type="gene ID" value="SNOG_20078"/>
</dbReference>
<dbReference type="GeneID" id="5974395"/>
<dbReference type="KEGG" id="pno:SNOG_20078"/>
<dbReference type="VEuPathDB" id="FungiDB:JI435_200780"/>
<dbReference type="HOGENOM" id="CLU_2085624_0_0_1"/>
<dbReference type="InParanoid" id="A9JX75"/>
<dbReference type="PHI-base" id="PHI:3124"/>
<dbReference type="Proteomes" id="UP000001055">
    <property type="component" value="Unassembled WGS sequence"/>
</dbReference>
<dbReference type="GO" id="GO:0005576">
    <property type="term" value="C:extracellular region"/>
    <property type="evidence" value="ECO:0007669"/>
    <property type="project" value="UniProtKB-SubCell"/>
</dbReference>
<dbReference type="GO" id="GO:0008061">
    <property type="term" value="F:chitin binding"/>
    <property type="evidence" value="ECO:0000304"/>
    <property type="project" value="PHI-base"/>
</dbReference>
<dbReference type="GO" id="GO:0140295">
    <property type="term" value="F:pathogen-derived receptor ligand activity"/>
    <property type="evidence" value="ECO:0000269"/>
    <property type="project" value="PHI-base"/>
</dbReference>
<dbReference type="GO" id="GO:0080185">
    <property type="term" value="P:effector-mediated activation of plant hypersensitive response by symbiont"/>
    <property type="evidence" value="ECO:0000269"/>
    <property type="project" value="PHI-base"/>
</dbReference>
<dbReference type="InterPro" id="IPR044057">
    <property type="entry name" value="SnTox1_CBL"/>
</dbReference>
<dbReference type="Pfam" id="PF18973">
    <property type="entry name" value="CBL"/>
    <property type="match status" value="1"/>
</dbReference>
<accession>A9JX75</accession>
<protein>
    <recommendedName>
        <fullName evidence="12">Cysteine rich necrotrophic effector Tox1</fullName>
    </recommendedName>
    <alternativeName>
        <fullName evidence="11">Toxin 1</fullName>
    </alternativeName>
</protein>
<comment type="function">
    <text evidence="2 3 4 5 6 7 8 9 10">Necrotrophic effector that plays a critical role during fungal penetration, via its interaction with the host Snn1 protein (PubMed:18943793, PubMed:20084492, PubMed:22241993, PubMed:26217355, PubMed:26416667, PubMed:27041151, PubMed:27133896, PubMed:27819043, PubMed:30858234). Snn1 is a member of the wall-associated kinase class of receptors, which are known to drive pathways for biotrophic pathogen resistance (PubMed:27819043). Recognition of Tox1 by Snn1 induces mitogen-activated protein kinase genes such as MAPK3 and activates programmed cell death, which allows this necrotroph to gain nutrients and sporulate (PubMed:27041151, PubMed:27819043). Recognition of Tox1 by Snn1 also induces other plant defense responses, including oxidative burst and pathogenesis related (PR) gene expression (PubMed:22241993). The development of necrosis and disease induced by Tox1, and particularly penetration during infection, requires light, which is probably related to the light-dependent expression of host Snn1 (PubMed:22241993, PubMed:27819043). Tox1 plays an additional role in providing significant protection from wheat chitinases by binding chitin in the fungal cell wall (PubMed:27041151).</text>
</comment>
<comment type="subunit">
    <text evidence="9">Interacts with host cell wall-associated kinase receptor Snn1.</text>
</comment>
<comment type="subcellular location">
    <subcellularLocation>
        <location evidence="4 7">Secreted</location>
    </subcellularLocation>
    <text evidence="7">Localizes to the outside of mycelium and the penetration structure (PubMed:27041151). Remains largely on the leaf surface during mesophyll necrosis (PubMed:27041151).</text>
</comment>
<comment type="induction">
    <text evidence="4 10">Expression is induced in planta during disease development and peaks at 3 days post-inoculation correlating with the onset of necrotic lesion development (PubMed:22241993). Expression is increased in the absence of toxin A (ToxA) (PubMed:30858234).</text>
</comment>
<comment type="disruption phenotype">
    <text evidence="4 5">Impairs pathogenicity on differential wheat lines harboring the Snn1 gene.</text>
</comment>
<comment type="miscellaneous">
    <text evidence="2 9">The host Snn1 gene confers susceptibility to strains of the necrotrophic pathogen Parastagonospora nodorum that produce the Tox1 protein.</text>
</comment>
<sequence length="117" mass="12145">MKLTMVLSVAFATLTFANEGILTFEGLGLARRQTICHTPGGSGCRASISGDQCCCTSCTPEDCSDLCKNGKQAAHEAQKQKKCAKCCNAGGESHELCCSIASAGIDCNPCTAGLRMC</sequence>
<evidence type="ECO:0000255" key="1"/>
<evidence type="ECO:0000269" key="2">
    <source>
    </source>
</evidence>
<evidence type="ECO:0000269" key="3">
    <source>
    </source>
</evidence>
<evidence type="ECO:0000269" key="4">
    <source>
    </source>
</evidence>
<evidence type="ECO:0000269" key="5">
    <source>
    </source>
</evidence>
<evidence type="ECO:0000269" key="6">
    <source>
    </source>
</evidence>
<evidence type="ECO:0000269" key="7">
    <source>
    </source>
</evidence>
<evidence type="ECO:0000269" key="8">
    <source>
    </source>
</evidence>
<evidence type="ECO:0000269" key="9">
    <source>
    </source>
</evidence>
<evidence type="ECO:0000269" key="10">
    <source>
    </source>
</evidence>
<evidence type="ECO:0000303" key="11">
    <source>
    </source>
</evidence>
<evidence type="ECO:0000303" key="12">
    <source>
    </source>
</evidence>
<evidence type="ECO:0000305" key="13">
    <source>
    </source>
</evidence>
<organism>
    <name type="scientific">Phaeosphaeria nodorum (strain SN15 / ATCC MYA-4574 / FGSC 10173)</name>
    <name type="common">Glume blotch fungus</name>
    <name type="synonym">Parastagonospora nodorum</name>
    <dbReference type="NCBI Taxonomy" id="321614"/>
    <lineage>
        <taxon>Eukaryota</taxon>
        <taxon>Fungi</taxon>
        <taxon>Dikarya</taxon>
        <taxon>Ascomycota</taxon>
        <taxon>Pezizomycotina</taxon>
        <taxon>Dothideomycetes</taxon>
        <taxon>Pleosporomycetidae</taxon>
        <taxon>Pleosporales</taxon>
        <taxon>Pleosporineae</taxon>
        <taxon>Phaeosphaeriaceae</taxon>
        <taxon>Parastagonospora</taxon>
    </lineage>
</organism>
<feature type="signal peptide" evidence="1">
    <location>
        <begin position="1"/>
        <end position="17"/>
    </location>
</feature>
<feature type="chain" id="PRO_5002739990" description="Cysteine rich necrotrophic effector Tox1">
    <location>
        <begin position="18"/>
        <end position="117"/>
    </location>
</feature>
<feature type="region of interest" description="Chitin-binding domain" evidence="13">
    <location>
        <begin position="87"/>
        <end position="117"/>
    </location>
</feature>
<feature type="disulfide bond" evidence="13">
    <location>
        <begin position="36"/>
        <end position="87"/>
    </location>
</feature>
<feature type="disulfide bond" evidence="13">
    <location>
        <begin position="44"/>
        <end position="55"/>
    </location>
</feature>
<feature type="disulfide bond" evidence="13">
    <location>
        <begin position="53"/>
        <end position="58"/>
    </location>
</feature>
<feature type="disulfide bond" evidence="13">
    <location>
        <begin position="54"/>
        <end position="98"/>
    </location>
</feature>
<feature type="disulfide bond" evidence="13">
    <location>
        <begin position="63"/>
        <end position="83"/>
    </location>
</feature>
<feature type="disulfide bond" evidence="13">
    <location>
        <begin position="67"/>
        <end position="117"/>
    </location>
</feature>
<feature type="disulfide bond" evidence="13">
    <location>
        <begin position="86"/>
        <end position="97"/>
    </location>
</feature>
<feature type="disulfide bond" evidence="13">
    <location>
        <begin position="107"/>
        <end position="110"/>
    </location>
</feature>
<reference key="1">
    <citation type="journal article" date="2007" name="Plant Cell">
        <title>Dothideomycete-plant interactions illuminated by genome sequencing and EST analysis of the wheat pathogen Stagonospora nodorum.</title>
        <authorList>
            <person name="Hane J.K."/>
            <person name="Lowe R.G.T."/>
            <person name="Solomon P.S."/>
            <person name="Tan K.-C."/>
            <person name="Schoch C.L."/>
            <person name="Spatafora J.W."/>
            <person name="Crous P.W."/>
            <person name="Kodira C.D."/>
            <person name="Birren B.W."/>
            <person name="Galagan J.E."/>
            <person name="Torriani S.F.F."/>
            <person name="McDonald B.A."/>
            <person name="Oliver R.P."/>
        </authorList>
    </citation>
    <scope>NUCLEOTIDE SEQUENCE [LARGE SCALE GENOMIC DNA]</scope>
    <source>
        <strain>SN15 / ATCC MYA-4574 / FGSC 10173</strain>
    </source>
</reference>
<reference key="2">
    <citation type="journal article" date="2004" name="Phytopathology">
        <title>Genetic and physical mapping of a gene conditioning sensitivity in wheat to a partially purified host-selective toxin produced by Stagonospora nodorum.</title>
        <authorList>
            <person name="Liu Z.H."/>
            <person name="Faris J.D."/>
            <person name="Meinhardt S.W."/>
            <person name="Ali S."/>
            <person name="Rasmussen J.B."/>
            <person name="Friesen T.L."/>
        </authorList>
    </citation>
    <scope>FUNCTION</scope>
</reference>
<reference key="3">
    <citation type="journal article" date="2010" name="Theor. Appl. Genet.">
        <title>Genetic analysis of disease susceptibility contributed by the compatible Tsn1-SnToxA and Snn1-SnTox1 interactions in the wheat-Stagonospora nodorum pathosystem.</title>
        <authorList>
            <person name="Chu C.G."/>
            <person name="Faris J.D."/>
            <person name="Xu S.S."/>
            <person name="Friesen T.L."/>
        </authorList>
    </citation>
    <scope>FUNCTION</scope>
</reference>
<reference key="4">
    <citation type="journal article" date="2012" name="PLoS Pathog.">
        <title>The cysteine rich necrotrophic effector SnTox1 produced by Stagonospora nodorum triggers susceptibility of wheat lines harboring Snn1.</title>
        <authorList>
            <person name="Liu Z."/>
            <person name="Zhang Z."/>
            <person name="Faris J.D."/>
            <person name="Oliver R.P."/>
            <person name="Syme R."/>
            <person name="McDonald M.C."/>
            <person name="McDonald B.A."/>
            <person name="Solomon P.S."/>
            <person name="Lu S."/>
            <person name="Shelver W.L."/>
            <person name="Xu S."/>
            <person name="Friesen T.L."/>
        </authorList>
    </citation>
    <scope>IDENTIFICATION</scope>
    <scope>FUNCTION</scope>
    <scope>DOMAIN</scope>
    <scope>DISRUPTION PHENOTYPE</scope>
    <scope>INDUCTION</scope>
    <scope>DISULFIDE BOND</scope>
    <scope>SUBCELLULAR LOCATION</scope>
</reference>
<reference key="5">
    <citation type="journal article" date="2015" name="Front. Plant Sci.">
        <title>Functional redundancy of necrotrophic effectors - consequences for exploitation for breeding.</title>
        <authorList>
            <person name="Tan K.C."/>
            <person name="Phan H.T."/>
            <person name="Rybak K."/>
            <person name="John E."/>
            <person name="Chooi Y.H."/>
            <person name="Solomon P.S."/>
            <person name="Oliver R.P."/>
        </authorList>
    </citation>
    <scope>FUNCTION</scope>
    <scope>DISRUPTION PHENOTYPE</scope>
</reference>
<reference key="6">
    <citation type="journal article" date="2015" name="G3 (Bethesda)">
        <title>Fine-Mapping the Wheat Snn1 Locus Conferring Sensitivity to the Parastagonospora nodorum Necrotrophic Effector SnTox1 Using an Eight Founder Multiparent Advanced Generation Inter-Cross Population.</title>
        <authorList>
            <person name="Cockram J."/>
            <person name="Scuderi A."/>
            <person name="Barber T."/>
            <person name="Furuki E."/>
            <person name="Gardner K.A."/>
            <person name="Gosman N."/>
            <person name="Kowalczyk R."/>
            <person name="Phan H.P."/>
            <person name="Rose G.A."/>
            <person name="Tan K.C."/>
            <person name="Oliver R.P."/>
            <person name="Mackay I.J."/>
        </authorList>
    </citation>
    <scope>FUNCTION</scope>
</reference>
<reference key="7">
    <citation type="journal article" date="2016" name="New Phytol.">
        <title>SnTox1, a Parastagonospora nodorum necrotrophic effector, is a dual-function protein that facilitates infection while protecting from wheat-produced chitinases.</title>
        <authorList>
            <person name="Liu Z."/>
            <person name="Gao Y."/>
            <person name="Kim Y.M."/>
            <person name="Faris J.D."/>
            <person name="Shelver W.L."/>
            <person name="de Wit P.J."/>
            <person name="Xu S.S."/>
            <person name="Friesen T.L."/>
        </authorList>
    </citation>
    <scope>FUNCTION</scope>
    <scope>CHITIN-BINDING</scope>
    <scope>SUBCELLULAR LOCATION</scope>
</reference>
<reference key="8">
    <citation type="journal article" date="2016" name="Plant J.">
        <title>Differential effector gene expression underpins epistasis in a plant fungal disease.</title>
        <authorList>
            <person name="Phan H.T."/>
            <person name="Rybak K."/>
            <person name="Furuki E."/>
            <person name="Breen S."/>
            <person name="Solomon P.S."/>
            <person name="Oliver R.P."/>
            <person name="Tan K.C."/>
        </authorList>
    </citation>
    <scope>FUNCTION</scope>
</reference>
<reference key="9">
    <citation type="journal article" date="2016" name="Sci. Adv.">
        <title>The hijacking of a receptor kinase-driven pathway by a wheat fungal pathogen leads to disease.</title>
        <authorList>
            <person name="Shi G."/>
            <person name="Zhang Z."/>
            <person name="Friesen T.L."/>
            <person name="Raats D."/>
            <person name="Fahima T."/>
            <person name="Brueggeman R.S."/>
            <person name="Lu S."/>
            <person name="Trick H.N."/>
            <person name="Liu Z."/>
            <person name="Chao W."/>
            <person name="Frenkel Z."/>
            <person name="Xu S.S."/>
            <person name="Rasmussen J.B."/>
            <person name="Faris J.D."/>
        </authorList>
    </citation>
    <scope>FUNCTION</scope>
    <scope>INTERACTION WITH HOST SNN1</scope>
</reference>
<reference key="10">
    <citation type="journal article" date="2019" name="Plant Physiol.">
        <title>Genetics of variable disease expression conferred by inverse gene-for-gene interactions in the wheat-Parastagonospora nodorum pathosystem.</title>
        <authorList>
            <person name="Peters Haugrud A.R."/>
            <person name="Zhang Z."/>
            <person name="Richards J.K."/>
            <person name="Friesen T.L."/>
            <person name="Faris J.D."/>
        </authorList>
    </citation>
    <scope>FUNCTION</scope>
    <scope>INDUCTION</scope>
</reference>
<proteinExistence type="evidence at protein level"/>